<organism>
    <name type="scientific">Neurospora crassa (strain ATCC 24698 / 74-OR23-1A / CBS 708.71 / DSM 1257 / FGSC 987)</name>
    <dbReference type="NCBI Taxonomy" id="367110"/>
    <lineage>
        <taxon>Eukaryota</taxon>
        <taxon>Fungi</taxon>
        <taxon>Dikarya</taxon>
        <taxon>Ascomycota</taxon>
        <taxon>Pezizomycotina</taxon>
        <taxon>Sordariomycetes</taxon>
        <taxon>Sordariomycetidae</taxon>
        <taxon>Sordariales</taxon>
        <taxon>Sordariaceae</taxon>
        <taxon>Neurospora</taxon>
    </lineage>
</organism>
<sequence length="405" mass="44440">MADTEQPPTAPTAPEPTTATPTAPIAPVAIFKKRGAKGKANLRKRPASPPPAAKDSDDDSSDFESSEDEATGQRIKRRKKNHHSAAVMASSRDHNASTNSGVTKEEQIRSNTIYEADRDAALRLDATKQDATKGSNWFDEDNEKEDLSVGNLLGRTRTMMKTKKKVGGEDDAVQNSEREPDGTYRGLANQASYIQKNPNAPNRKVGPIKAPSNIRTITITDMAPDVCKDYKQTGFCGFGDNCKFLHAREDYAHGWQLDKEWENVTKGKKNLQGTVVASADRRNKPKNTAEEEEDADAAEEALLENIPFACIICRGPYSNSPVVTRCGHYFCEACALKRYRKDPSCAACGSGTNGVFNAAKRLAKLLEKKKARAERLRREARERGEEVSEEEDEGEDEGEGAEGSD</sequence>
<comment type="function">
    <text evidence="1">Involved in pre-mRNA splicing.</text>
</comment>
<comment type="subunit">
    <text evidence="1">Associated with the spliceosome.</text>
</comment>
<comment type="subcellular location">
    <subcellularLocation>
        <location evidence="1">Nucleus</location>
    </subcellularLocation>
</comment>
<comment type="similarity">
    <text evidence="5">Belongs to the CWC24 family.</text>
</comment>
<accession>Q7SDY3</accession>
<keyword id="KW-0238">DNA-binding</keyword>
<keyword id="KW-0479">Metal-binding</keyword>
<keyword id="KW-0507">mRNA processing</keyword>
<keyword id="KW-0508">mRNA splicing</keyword>
<keyword id="KW-0539">Nucleus</keyword>
<keyword id="KW-1185">Reference proteome</keyword>
<keyword id="KW-0747">Spliceosome</keyword>
<keyword id="KW-0862">Zinc</keyword>
<keyword id="KW-0863">Zinc-finger</keyword>
<protein>
    <recommendedName>
        <fullName>Pre-mRNA-splicing factor cwc-24</fullName>
    </recommendedName>
</protein>
<feature type="chain" id="PRO_0000055891" description="Pre-mRNA-splicing factor cwc-24">
    <location>
        <begin position="1"/>
        <end position="405"/>
    </location>
</feature>
<feature type="zinc finger region" description="C3H1-type" evidence="3">
    <location>
        <begin position="221"/>
        <end position="249"/>
    </location>
</feature>
<feature type="zinc finger region" description="RING-type" evidence="2">
    <location>
        <begin position="310"/>
        <end position="349"/>
    </location>
</feature>
<feature type="region of interest" description="Disordered" evidence="4">
    <location>
        <begin position="1"/>
        <end position="114"/>
    </location>
</feature>
<feature type="region of interest" description="Disordered" evidence="4">
    <location>
        <begin position="162"/>
        <end position="184"/>
    </location>
</feature>
<feature type="region of interest" description="Disordered" evidence="4">
    <location>
        <begin position="370"/>
        <end position="405"/>
    </location>
</feature>
<feature type="compositionally biased region" description="Low complexity" evidence="4">
    <location>
        <begin position="15"/>
        <end position="29"/>
    </location>
</feature>
<feature type="compositionally biased region" description="Basic residues" evidence="4">
    <location>
        <begin position="31"/>
        <end position="46"/>
    </location>
</feature>
<feature type="compositionally biased region" description="Acidic residues" evidence="4">
    <location>
        <begin position="56"/>
        <end position="70"/>
    </location>
</feature>
<feature type="compositionally biased region" description="Basic residues" evidence="4">
    <location>
        <begin position="74"/>
        <end position="83"/>
    </location>
</feature>
<feature type="compositionally biased region" description="Basic and acidic residues" evidence="4">
    <location>
        <begin position="370"/>
        <end position="386"/>
    </location>
</feature>
<feature type="compositionally biased region" description="Acidic residues" evidence="4">
    <location>
        <begin position="387"/>
        <end position="405"/>
    </location>
</feature>
<gene>
    <name type="primary">cwc-24</name>
    <name type="ORF">NCU01954</name>
</gene>
<name>CWC24_NEUCR</name>
<dbReference type="EMBL" id="CM002236">
    <property type="protein sequence ID" value="EAA35002.1"/>
    <property type="molecule type" value="Genomic_DNA"/>
</dbReference>
<dbReference type="RefSeq" id="XP_964238.1">
    <property type="nucleotide sequence ID" value="XM_959145.2"/>
</dbReference>
<dbReference type="FunCoup" id="Q7SDY3">
    <property type="interactions" value="281"/>
</dbReference>
<dbReference type="STRING" id="367110.Q7SDY3"/>
<dbReference type="PaxDb" id="5141-EFNCRP00000001324"/>
<dbReference type="EnsemblFungi" id="EAA35002">
    <property type="protein sequence ID" value="EAA35002"/>
    <property type="gene ID" value="NCU01954"/>
</dbReference>
<dbReference type="GeneID" id="3880387"/>
<dbReference type="KEGG" id="ncr:NCU01954"/>
<dbReference type="VEuPathDB" id="FungiDB:NCU01954"/>
<dbReference type="HOGENOM" id="CLU_050460_0_0_1"/>
<dbReference type="InParanoid" id="Q7SDY3"/>
<dbReference type="OrthoDB" id="25761at2759"/>
<dbReference type="Proteomes" id="UP000001805">
    <property type="component" value="Chromosome 1, Linkage Group I"/>
</dbReference>
<dbReference type="GO" id="GO:0005684">
    <property type="term" value="C:U2-type spliceosomal complex"/>
    <property type="evidence" value="ECO:0000318"/>
    <property type="project" value="GO_Central"/>
</dbReference>
<dbReference type="GO" id="GO:0003677">
    <property type="term" value="F:DNA binding"/>
    <property type="evidence" value="ECO:0007669"/>
    <property type="project" value="UniProtKB-KW"/>
</dbReference>
<dbReference type="GO" id="GO:0008270">
    <property type="term" value="F:zinc ion binding"/>
    <property type="evidence" value="ECO:0007669"/>
    <property type="project" value="UniProtKB-KW"/>
</dbReference>
<dbReference type="GO" id="GO:0006397">
    <property type="term" value="P:mRNA processing"/>
    <property type="evidence" value="ECO:0007669"/>
    <property type="project" value="UniProtKB-KW"/>
</dbReference>
<dbReference type="GO" id="GO:0034247">
    <property type="term" value="P:snoRNA splicing"/>
    <property type="evidence" value="ECO:0000318"/>
    <property type="project" value="GO_Central"/>
</dbReference>
<dbReference type="CDD" id="cd16539">
    <property type="entry name" value="RING-HC_RNF113A_B"/>
    <property type="match status" value="1"/>
</dbReference>
<dbReference type="FunFam" id="3.30.40.10:FF:000045">
    <property type="entry name" value="RING finger protein 113A"/>
    <property type="match status" value="1"/>
</dbReference>
<dbReference type="Gene3D" id="4.10.1000.10">
    <property type="entry name" value="Zinc finger, CCCH-type"/>
    <property type="match status" value="1"/>
</dbReference>
<dbReference type="Gene3D" id="3.30.40.10">
    <property type="entry name" value="Zinc/RING finger domain, C3HC4 (zinc finger)"/>
    <property type="match status" value="1"/>
</dbReference>
<dbReference type="InterPro" id="IPR039971">
    <property type="entry name" value="CWC24-like"/>
</dbReference>
<dbReference type="InterPro" id="IPR000571">
    <property type="entry name" value="Znf_CCCH"/>
</dbReference>
<dbReference type="InterPro" id="IPR036855">
    <property type="entry name" value="Znf_CCCH_sf"/>
</dbReference>
<dbReference type="InterPro" id="IPR001841">
    <property type="entry name" value="Znf_RING"/>
</dbReference>
<dbReference type="InterPro" id="IPR013083">
    <property type="entry name" value="Znf_RING/FYVE/PHD"/>
</dbReference>
<dbReference type="InterPro" id="IPR017907">
    <property type="entry name" value="Znf_RING_CS"/>
</dbReference>
<dbReference type="PANTHER" id="PTHR12930:SF0">
    <property type="entry name" value="RING FINGER PROTEIN 113B"/>
    <property type="match status" value="1"/>
</dbReference>
<dbReference type="PANTHER" id="PTHR12930">
    <property type="entry name" value="ZINC FINGER PROTEIN 183"/>
    <property type="match status" value="1"/>
</dbReference>
<dbReference type="Pfam" id="PF00642">
    <property type="entry name" value="zf-CCCH"/>
    <property type="match status" value="1"/>
</dbReference>
<dbReference type="Pfam" id="PF14634">
    <property type="entry name" value="zf-RING_5"/>
    <property type="match status" value="1"/>
</dbReference>
<dbReference type="SMART" id="SM00184">
    <property type="entry name" value="RING"/>
    <property type="match status" value="1"/>
</dbReference>
<dbReference type="SMART" id="SM00356">
    <property type="entry name" value="ZnF_C3H1"/>
    <property type="match status" value="1"/>
</dbReference>
<dbReference type="SUPFAM" id="SSF90229">
    <property type="entry name" value="CCCH zinc finger"/>
    <property type="match status" value="1"/>
</dbReference>
<dbReference type="SUPFAM" id="SSF57850">
    <property type="entry name" value="RING/U-box"/>
    <property type="match status" value="1"/>
</dbReference>
<dbReference type="PROSITE" id="PS50103">
    <property type="entry name" value="ZF_C3H1"/>
    <property type="match status" value="1"/>
</dbReference>
<dbReference type="PROSITE" id="PS00518">
    <property type="entry name" value="ZF_RING_1"/>
    <property type="match status" value="1"/>
</dbReference>
<dbReference type="PROSITE" id="PS50089">
    <property type="entry name" value="ZF_RING_2"/>
    <property type="match status" value="1"/>
</dbReference>
<reference key="1">
    <citation type="journal article" date="2003" name="Nature">
        <title>The genome sequence of the filamentous fungus Neurospora crassa.</title>
        <authorList>
            <person name="Galagan J.E."/>
            <person name="Calvo S.E."/>
            <person name="Borkovich K.A."/>
            <person name="Selker E.U."/>
            <person name="Read N.D."/>
            <person name="Jaffe D.B."/>
            <person name="FitzHugh W."/>
            <person name="Ma L.-J."/>
            <person name="Smirnov S."/>
            <person name="Purcell S."/>
            <person name="Rehman B."/>
            <person name="Elkins T."/>
            <person name="Engels R."/>
            <person name="Wang S."/>
            <person name="Nielsen C.B."/>
            <person name="Butler J."/>
            <person name="Endrizzi M."/>
            <person name="Qui D."/>
            <person name="Ianakiev P."/>
            <person name="Bell-Pedersen D."/>
            <person name="Nelson M.A."/>
            <person name="Werner-Washburne M."/>
            <person name="Selitrennikoff C.P."/>
            <person name="Kinsey J.A."/>
            <person name="Braun E.L."/>
            <person name="Zelter A."/>
            <person name="Schulte U."/>
            <person name="Kothe G.O."/>
            <person name="Jedd G."/>
            <person name="Mewes H.-W."/>
            <person name="Staben C."/>
            <person name="Marcotte E."/>
            <person name="Greenberg D."/>
            <person name="Roy A."/>
            <person name="Foley K."/>
            <person name="Naylor J."/>
            <person name="Stange-Thomann N."/>
            <person name="Barrett R."/>
            <person name="Gnerre S."/>
            <person name="Kamal M."/>
            <person name="Kamvysselis M."/>
            <person name="Mauceli E.W."/>
            <person name="Bielke C."/>
            <person name="Rudd S."/>
            <person name="Frishman D."/>
            <person name="Krystofova S."/>
            <person name="Rasmussen C."/>
            <person name="Metzenberg R.L."/>
            <person name="Perkins D.D."/>
            <person name="Kroken S."/>
            <person name="Cogoni C."/>
            <person name="Macino G."/>
            <person name="Catcheside D.E.A."/>
            <person name="Li W."/>
            <person name="Pratt R.J."/>
            <person name="Osmani S.A."/>
            <person name="DeSouza C.P.C."/>
            <person name="Glass N.L."/>
            <person name="Orbach M.J."/>
            <person name="Berglund J.A."/>
            <person name="Voelker R."/>
            <person name="Yarden O."/>
            <person name="Plamann M."/>
            <person name="Seiler S."/>
            <person name="Dunlap J.C."/>
            <person name="Radford A."/>
            <person name="Aramayo R."/>
            <person name="Natvig D.O."/>
            <person name="Alex L.A."/>
            <person name="Mannhaupt G."/>
            <person name="Ebbole D.J."/>
            <person name="Freitag M."/>
            <person name="Paulsen I."/>
            <person name="Sachs M.S."/>
            <person name="Lander E.S."/>
            <person name="Nusbaum C."/>
            <person name="Birren B.W."/>
        </authorList>
    </citation>
    <scope>NUCLEOTIDE SEQUENCE [LARGE SCALE GENOMIC DNA]</scope>
    <source>
        <strain>ATCC 24698 / 74-OR23-1A / CBS 708.71 / DSM 1257 / FGSC 987</strain>
    </source>
</reference>
<proteinExistence type="inferred from homology"/>
<evidence type="ECO:0000250" key="1"/>
<evidence type="ECO:0000255" key="2">
    <source>
        <dbReference type="PROSITE-ProRule" id="PRU00175"/>
    </source>
</evidence>
<evidence type="ECO:0000255" key="3">
    <source>
        <dbReference type="PROSITE-ProRule" id="PRU00723"/>
    </source>
</evidence>
<evidence type="ECO:0000256" key="4">
    <source>
        <dbReference type="SAM" id="MobiDB-lite"/>
    </source>
</evidence>
<evidence type="ECO:0000305" key="5"/>